<geneLocation type="mitochondrion"/>
<feature type="chain" id="PRO_0000061563" description="Cytochrome b">
    <location>
        <begin position="1"/>
        <end position="379"/>
    </location>
</feature>
<feature type="transmembrane region" description="Helical" evidence="2">
    <location>
        <begin position="33"/>
        <end position="53"/>
    </location>
</feature>
<feature type="transmembrane region" description="Helical" evidence="2">
    <location>
        <begin position="77"/>
        <end position="98"/>
    </location>
</feature>
<feature type="transmembrane region" description="Helical" evidence="2">
    <location>
        <begin position="113"/>
        <end position="133"/>
    </location>
</feature>
<feature type="transmembrane region" description="Helical" evidence="2">
    <location>
        <begin position="178"/>
        <end position="198"/>
    </location>
</feature>
<feature type="transmembrane region" description="Helical" evidence="2">
    <location>
        <begin position="226"/>
        <end position="246"/>
    </location>
</feature>
<feature type="transmembrane region" description="Helical" evidence="2">
    <location>
        <begin position="288"/>
        <end position="308"/>
    </location>
</feature>
<feature type="transmembrane region" description="Helical" evidence="2">
    <location>
        <begin position="320"/>
        <end position="340"/>
    </location>
</feature>
<feature type="transmembrane region" description="Helical" evidence="2">
    <location>
        <begin position="347"/>
        <end position="367"/>
    </location>
</feature>
<feature type="binding site" description="axial binding residue" evidence="2">
    <location>
        <position position="83"/>
    </location>
    <ligand>
        <name>heme b</name>
        <dbReference type="ChEBI" id="CHEBI:60344"/>
        <label>b562</label>
    </ligand>
    <ligandPart>
        <name>Fe</name>
        <dbReference type="ChEBI" id="CHEBI:18248"/>
    </ligandPart>
</feature>
<feature type="binding site" description="axial binding residue" evidence="2">
    <location>
        <position position="97"/>
    </location>
    <ligand>
        <name>heme b</name>
        <dbReference type="ChEBI" id="CHEBI:60344"/>
        <label>b566</label>
    </ligand>
    <ligandPart>
        <name>Fe</name>
        <dbReference type="ChEBI" id="CHEBI:18248"/>
    </ligandPart>
</feature>
<feature type="binding site" description="axial binding residue" evidence="2">
    <location>
        <position position="182"/>
    </location>
    <ligand>
        <name>heme b</name>
        <dbReference type="ChEBI" id="CHEBI:60344"/>
        <label>b562</label>
    </ligand>
    <ligandPart>
        <name>Fe</name>
        <dbReference type="ChEBI" id="CHEBI:18248"/>
    </ligandPart>
</feature>
<feature type="binding site" description="axial binding residue" evidence="2">
    <location>
        <position position="196"/>
    </location>
    <ligand>
        <name>heme b</name>
        <dbReference type="ChEBI" id="CHEBI:60344"/>
        <label>b566</label>
    </ligand>
    <ligandPart>
        <name>Fe</name>
        <dbReference type="ChEBI" id="CHEBI:18248"/>
    </ligandPart>
</feature>
<feature type="binding site" evidence="2">
    <location>
        <position position="201"/>
    </location>
    <ligand>
        <name>a ubiquinone</name>
        <dbReference type="ChEBI" id="CHEBI:16389"/>
    </ligand>
</feature>
<dbReference type="EMBL" id="AY014931">
    <property type="protein sequence ID" value="AAG40490.1"/>
    <property type="molecule type" value="Genomic_DNA"/>
</dbReference>
<dbReference type="EMBL" id="AY014932">
    <property type="protein sequence ID" value="AAG40491.1"/>
    <property type="molecule type" value="Genomic_DNA"/>
</dbReference>
<dbReference type="EMBL" id="AY014933">
    <property type="protein sequence ID" value="AAG40492.1"/>
    <property type="molecule type" value="Genomic_DNA"/>
</dbReference>
<dbReference type="SMR" id="Q8SEL4"/>
<dbReference type="GO" id="GO:0005743">
    <property type="term" value="C:mitochondrial inner membrane"/>
    <property type="evidence" value="ECO:0007669"/>
    <property type="project" value="UniProtKB-SubCell"/>
</dbReference>
<dbReference type="GO" id="GO:0045275">
    <property type="term" value="C:respiratory chain complex III"/>
    <property type="evidence" value="ECO:0007669"/>
    <property type="project" value="InterPro"/>
</dbReference>
<dbReference type="GO" id="GO:0046872">
    <property type="term" value="F:metal ion binding"/>
    <property type="evidence" value="ECO:0007669"/>
    <property type="project" value="UniProtKB-KW"/>
</dbReference>
<dbReference type="GO" id="GO:0008121">
    <property type="term" value="F:ubiquinol-cytochrome-c reductase activity"/>
    <property type="evidence" value="ECO:0007669"/>
    <property type="project" value="InterPro"/>
</dbReference>
<dbReference type="GO" id="GO:0006122">
    <property type="term" value="P:mitochondrial electron transport, ubiquinol to cytochrome c"/>
    <property type="evidence" value="ECO:0007669"/>
    <property type="project" value="TreeGrafter"/>
</dbReference>
<dbReference type="CDD" id="cd00290">
    <property type="entry name" value="cytochrome_b_C"/>
    <property type="match status" value="1"/>
</dbReference>
<dbReference type="CDD" id="cd00284">
    <property type="entry name" value="Cytochrome_b_N"/>
    <property type="match status" value="1"/>
</dbReference>
<dbReference type="FunFam" id="1.20.810.10:FF:000002">
    <property type="entry name" value="Cytochrome b"/>
    <property type="match status" value="1"/>
</dbReference>
<dbReference type="Gene3D" id="1.20.810.10">
    <property type="entry name" value="Cytochrome Bc1 Complex, Chain C"/>
    <property type="match status" value="1"/>
</dbReference>
<dbReference type="InterPro" id="IPR005798">
    <property type="entry name" value="Cyt_b/b6_C"/>
</dbReference>
<dbReference type="InterPro" id="IPR036150">
    <property type="entry name" value="Cyt_b/b6_C_sf"/>
</dbReference>
<dbReference type="InterPro" id="IPR005797">
    <property type="entry name" value="Cyt_b/b6_N"/>
</dbReference>
<dbReference type="InterPro" id="IPR027387">
    <property type="entry name" value="Cytb/b6-like_sf"/>
</dbReference>
<dbReference type="InterPro" id="IPR030689">
    <property type="entry name" value="Cytochrome_b"/>
</dbReference>
<dbReference type="InterPro" id="IPR048260">
    <property type="entry name" value="Cytochrome_b_C_euk/bac"/>
</dbReference>
<dbReference type="InterPro" id="IPR048259">
    <property type="entry name" value="Cytochrome_b_N_euk/bac"/>
</dbReference>
<dbReference type="InterPro" id="IPR016174">
    <property type="entry name" value="Di-haem_cyt_TM"/>
</dbReference>
<dbReference type="PANTHER" id="PTHR19271">
    <property type="entry name" value="CYTOCHROME B"/>
    <property type="match status" value="1"/>
</dbReference>
<dbReference type="PANTHER" id="PTHR19271:SF16">
    <property type="entry name" value="CYTOCHROME B"/>
    <property type="match status" value="1"/>
</dbReference>
<dbReference type="Pfam" id="PF00032">
    <property type="entry name" value="Cytochrom_B_C"/>
    <property type="match status" value="1"/>
</dbReference>
<dbReference type="Pfam" id="PF00033">
    <property type="entry name" value="Cytochrome_B"/>
    <property type="match status" value="1"/>
</dbReference>
<dbReference type="PIRSF" id="PIRSF038885">
    <property type="entry name" value="COB"/>
    <property type="match status" value="1"/>
</dbReference>
<dbReference type="SUPFAM" id="SSF81648">
    <property type="entry name" value="a domain/subunit of cytochrome bc1 complex (Ubiquinol-cytochrome c reductase)"/>
    <property type="match status" value="1"/>
</dbReference>
<dbReference type="SUPFAM" id="SSF81342">
    <property type="entry name" value="Transmembrane di-heme cytochromes"/>
    <property type="match status" value="1"/>
</dbReference>
<dbReference type="PROSITE" id="PS51003">
    <property type="entry name" value="CYTB_CTER"/>
    <property type="match status" value="1"/>
</dbReference>
<dbReference type="PROSITE" id="PS51002">
    <property type="entry name" value="CYTB_NTER"/>
    <property type="match status" value="1"/>
</dbReference>
<keyword id="KW-0249">Electron transport</keyword>
<keyword id="KW-0349">Heme</keyword>
<keyword id="KW-0408">Iron</keyword>
<keyword id="KW-0472">Membrane</keyword>
<keyword id="KW-0479">Metal-binding</keyword>
<keyword id="KW-0496">Mitochondrion</keyword>
<keyword id="KW-0999">Mitochondrion inner membrane</keyword>
<keyword id="KW-0679">Respiratory chain</keyword>
<keyword id="KW-0812">Transmembrane</keyword>
<keyword id="KW-1133">Transmembrane helix</keyword>
<keyword id="KW-0813">Transport</keyword>
<keyword id="KW-0830">Ubiquinone</keyword>
<comment type="function">
    <text evidence="2">Component of the ubiquinol-cytochrome c reductase complex (complex III or cytochrome b-c1 complex) that is part of the mitochondrial respiratory chain. The b-c1 complex mediates electron transfer from ubiquinol to cytochrome c. Contributes to the generation of a proton gradient across the mitochondrial membrane that is then used for ATP synthesis.</text>
</comment>
<comment type="cofactor">
    <cofactor evidence="2">
        <name>heme b</name>
        <dbReference type="ChEBI" id="CHEBI:60344"/>
    </cofactor>
    <text evidence="2">Binds 2 heme b groups non-covalently.</text>
</comment>
<comment type="subunit">
    <text evidence="2">The cytochrome bc1 complex contains 11 subunits: 3 respiratory subunits (MT-CYB, CYC1 and UQCRFS1), 2 core proteins (UQCRC1 and UQCRC2) and 6 low-molecular weight proteins (UQCRH/QCR6, UQCRB/QCR7, UQCRQ/QCR8, UQCR10/QCR9, UQCR11/QCR10 and a cleavage product of UQCRFS1). This cytochrome bc1 complex then forms a dimer.</text>
</comment>
<comment type="subcellular location">
    <subcellularLocation>
        <location evidence="2">Mitochondrion inner membrane</location>
        <topology evidence="2">Multi-pass membrane protein</topology>
    </subcellularLocation>
</comment>
<comment type="miscellaneous">
    <text evidence="1">Heme 1 (or BL or b562) is low-potential and absorbs at about 562 nm, and heme 2 (or BH or b566) is high-potential and absorbs at about 566 nm.</text>
</comment>
<comment type="similarity">
    <text evidence="3 4">Belongs to the cytochrome b family.</text>
</comment>
<comment type="caution">
    <text evidence="2">The full-length protein contains only eight transmembrane helices, not nine as predicted by bioinformatics tools.</text>
</comment>
<reference key="1">
    <citation type="journal article" date="2003" name="J. Mammal.">
        <title>Phylogenetic diversification within the Sorex cinereus group (Soricidae).</title>
        <authorList>
            <person name="Demboski J.R."/>
            <person name="Cook J.A."/>
        </authorList>
    </citation>
    <scope>NUCLEOTIDE SEQUENCE [GENOMIC DNA]</scope>
    <source>
        <strain>Isolate UAM 22593</strain>
        <strain>Isolate UAM 22594</strain>
        <strain>Isolate UAM 22596</strain>
    </source>
</reference>
<organism>
    <name type="scientific">Sorex pribilofensis</name>
    <name type="common">Pribilof island shrew</name>
    <name type="synonym">Sorex hydrodromus</name>
    <dbReference type="NCBI Taxonomy" id="144785"/>
    <lineage>
        <taxon>Eukaryota</taxon>
        <taxon>Metazoa</taxon>
        <taxon>Chordata</taxon>
        <taxon>Craniata</taxon>
        <taxon>Vertebrata</taxon>
        <taxon>Euteleostomi</taxon>
        <taxon>Mammalia</taxon>
        <taxon>Eutheria</taxon>
        <taxon>Laurasiatheria</taxon>
        <taxon>Eulipotyphla</taxon>
        <taxon>Soricidae</taxon>
        <taxon>Soricinae</taxon>
        <taxon>Sorex</taxon>
    </lineage>
</organism>
<gene>
    <name type="primary">MT-CYB</name>
    <name type="synonym">COB</name>
    <name type="synonym">CYTB</name>
    <name type="synonym">MTCYB</name>
</gene>
<sequence length="379" mass="42598">MTNLRKTHPLMNIINSSFIDLPAPSNISSWWNFGSLLGICLIVQILTGLFLAMHYTSDTMTAFSSVTHICRDVNYGWLIRYLHANGASMFFICLFLHVGRGLYYGSYMFLETWNTGVLLLFAVMATAFMGYVLPWGQMSFWGATVITNLLSAIPYIGSDLVEWIWGGFSVDKATLTRFFAFHFILPFIIAALAGVHLLFLHETGSNNPSGLCSDADKIPFHPYYTIKDILGVLLLILVLTSLVLFSPDLLGDPDNYTPANPLNTPPHIKPEWYFLFAYAILRSIPNKLGGVLALVLSILVLAVVPFLHTSKQRSMMFRPFSQCLFWILVADLLTLTWIGGQPVEHPFIIIGQLASILYFLLILVLMPITSLFENNLLKW</sequence>
<name>CYB_SORPI</name>
<proteinExistence type="inferred from homology"/>
<protein>
    <recommendedName>
        <fullName>Cytochrome b</fullName>
    </recommendedName>
    <alternativeName>
        <fullName>Complex III subunit 3</fullName>
    </alternativeName>
    <alternativeName>
        <fullName>Complex III subunit III</fullName>
    </alternativeName>
    <alternativeName>
        <fullName>Cytochrome b-c1 complex subunit 3</fullName>
    </alternativeName>
    <alternativeName>
        <fullName>Ubiquinol-cytochrome-c reductase complex cytochrome b subunit</fullName>
    </alternativeName>
</protein>
<accession>Q8SEL4</accession>
<evidence type="ECO:0000250" key="1"/>
<evidence type="ECO:0000250" key="2">
    <source>
        <dbReference type="UniProtKB" id="P00157"/>
    </source>
</evidence>
<evidence type="ECO:0000255" key="3">
    <source>
        <dbReference type="PROSITE-ProRule" id="PRU00967"/>
    </source>
</evidence>
<evidence type="ECO:0000255" key="4">
    <source>
        <dbReference type="PROSITE-ProRule" id="PRU00968"/>
    </source>
</evidence>